<reference key="1">
    <citation type="journal article" date="2008" name="Infect. Immun.">
        <title>Genome of Mycoplasma arthritidis.</title>
        <authorList>
            <person name="Dybvig K."/>
            <person name="Zuhua C."/>
            <person name="Lao P."/>
            <person name="Jordan D.S."/>
            <person name="French C.T."/>
            <person name="Tu A.H."/>
            <person name="Loraine A.E."/>
        </authorList>
    </citation>
    <scope>NUCLEOTIDE SEQUENCE [LARGE SCALE GENOMIC DNA]</scope>
    <source>
        <strain>158L3-1</strain>
    </source>
</reference>
<accession>B3PMA1</accession>
<feature type="chain" id="PRO_1000196443" description="Small ribosomal subunit protein bS16">
    <location>
        <begin position="1"/>
        <end position="85"/>
    </location>
</feature>
<gene>
    <name evidence="1" type="primary">rpsP</name>
    <name type="ordered locus">MARTH_orf245</name>
</gene>
<comment type="similarity">
    <text evidence="1">Belongs to the bacterial ribosomal protein bS16 family.</text>
</comment>
<proteinExistence type="inferred from homology"/>
<evidence type="ECO:0000255" key="1">
    <source>
        <dbReference type="HAMAP-Rule" id="MF_00385"/>
    </source>
</evidence>
<evidence type="ECO:0000305" key="2"/>
<dbReference type="EMBL" id="CP001047">
    <property type="protein sequence ID" value="ACF07153.1"/>
    <property type="molecule type" value="Genomic_DNA"/>
</dbReference>
<dbReference type="RefSeq" id="WP_012498110.1">
    <property type="nucleotide sequence ID" value="NC_011025.1"/>
</dbReference>
<dbReference type="SMR" id="B3PMA1"/>
<dbReference type="STRING" id="243272.MARTH_orf245"/>
<dbReference type="KEGG" id="mat:MARTH_orf245"/>
<dbReference type="eggNOG" id="COG0228">
    <property type="taxonomic scope" value="Bacteria"/>
</dbReference>
<dbReference type="HOGENOM" id="CLU_100590_5_0_14"/>
<dbReference type="Proteomes" id="UP000008812">
    <property type="component" value="Chromosome"/>
</dbReference>
<dbReference type="GO" id="GO:0005737">
    <property type="term" value="C:cytoplasm"/>
    <property type="evidence" value="ECO:0007669"/>
    <property type="project" value="UniProtKB-ARBA"/>
</dbReference>
<dbReference type="GO" id="GO:0015935">
    <property type="term" value="C:small ribosomal subunit"/>
    <property type="evidence" value="ECO:0007669"/>
    <property type="project" value="TreeGrafter"/>
</dbReference>
<dbReference type="GO" id="GO:0003735">
    <property type="term" value="F:structural constituent of ribosome"/>
    <property type="evidence" value="ECO:0007669"/>
    <property type="project" value="InterPro"/>
</dbReference>
<dbReference type="GO" id="GO:0006412">
    <property type="term" value="P:translation"/>
    <property type="evidence" value="ECO:0007669"/>
    <property type="project" value="UniProtKB-UniRule"/>
</dbReference>
<dbReference type="Gene3D" id="3.30.1320.10">
    <property type="match status" value="1"/>
</dbReference>
<dbReference type="HAMAP" id="MF_00385">
    <property type="entry name" value="Ribosomal_bS16"/>
    <property type="match status" value="1"/>
</dbReference>
<dbReference type="InterPro" id="IPR000307">
    <property type="entry name" value="Ribosomal_bS16"/>
</dbReference>
<dbReference type="InterPro" id="IPR020592">
    <property type="entry name" value="Ribosomal_bS16_CS"/>
</dbReference>
<dbReference type="InterPro" id="IPR023803">
    <property type="entry name" value="Ribosomal_bS16_dom_sf"/>
</dbReference>
<dbReference type="NCBIfam" id="TIGR00002">
    <property type="entry name" value="S16"/>
    <property type="match status" value="1"/>
</dbReference>
<dbReference type="PANTHER" id="PTHR12919">
    <property type="entry name" value="30S RIBOSOMAL PROTEIN S16"/>
    <property type="match status" value="1"/>
</dbReference>
<dbReference type="PANTHER" id="PTHR12919:SF20">
    <property type="entry name" value="SMALL RIBOSOMAL SUBUNIT PROTEIN BS16M"/>
    <property type="match status" value="1"/>
</dbReference>
<dbReference type="Pfam" id="PF00886">
    <property type="entry name" value="Ribosomal_S16"/>
    <property type="match status" value="1"/>
</dbReference>
<dbReference type="SUPFAM" id="SSF54565">
    <property type="entry name" value="Ribosomal protein S16"/>
    <property type="match status" value="1"/>
</dbReference>
<dbReference type="PROSITE" id="PS00732">
    <property type="entry name" value="RIBOSOMAL_S16"/>
    <property type="match status" value="1"/>
</dbReference>
<name>RS16_META1</name>
<keyword id="KW-1185">Reference proteome</keyword>
<keyword id="KW-0687">Ribonucleoprotein</keyword>
<keyword id="KW-0689">Ribosomal protein</keyword>
<organism>
    <name type="scientific">Metamycoplasma arthritidis (strain 158L3-1)</name>
    <name type="common">Mycoplasma arthritidis</name>
    <dbReference type="NCBI Taxonomy" id="243272"/>
    <lineage>
        <taxon>Bacteria</taxon>
        <taxon>Bacillati</taxon>
        <taxon>Mycoplasmatota</taxon>
        <taxon>Mycoplasmoidales</taxon>
        <taxon>Metamycoplasmataceae</taxon>
        <taxon>Metamycoplasma</taxon>
    </lineage>
</organism>
<sequence>MVKLRLKRVGKKFHAQYKIVAADARSPRDGKFIEELGHYDPHAKKLTLNKELLTKYLDQGAKPTDTVRTLLKQEQFYSNYIASKK</sequence>
<protein>
    <recommendedName>
        <fullName evidence="1">Small ribosomal subunit protein bS16</fullName>
    </recommendedName>
    <alternativeName>
        <fullName evidence="2">30S ribosomal protein S16</fullName>
    </alternativeName>
</protein>